<dbReference type="EC" id="1.3.1.33"/>
<dbReference type="EMBL" id="X63060">
    <property type="protein sequence ID" value="CAA44786.1"/>
    <property type="molecule type" value="Genomic_DNA"/>
</dbReference>
<dbReference type="PIR" id="S20941">
    <property type="entry name" value="S20941"/>
</dbReference>
<dbReference type="SMR" id="Q01289"/>
<dbReference type="BRENDA" id="1.3.1.33">
    <property type="organism ID" value="4872"/>
</dbReference>
<dbReference type="UniPathway" id="UPA00668"/>
<dbReference type="GO" id="GO:0009507">
    <property type="term" value="C:chloroplast"/>
    <property type="evidence" value="ECO:0007669"/>
    <property type="project" value="UniProtKB-SubCell"/>
</dbReference>
<dbReference type="GO" id="GO:0016630">
    <property type="term" value="F:protochlorophyllide reductase activity"/>
    <property type="evidence" value="ECO:0007669"/>
    <property type="project" value="UniProtKB-EC"/>
</dbReference>
<dbReference type="GO" id="GO:0015995">
    <property type="term" value="P:chlorophyll biosynthetic process"/>
    <property type="evidence" value="ECO:0007669"/>
    <property type="project" value="UniProtKB-UniPathway"/>
</dbReference>
<dbReference type="GO" id="GO:0015979">
    <property type="term" value="P:photosynthesis"/>
    <property type="evidence" value="ECO:0007669"/>
    <property type="project" value="UniProtKB-KW"/>
</dbReference>
<dbReference type="CDD" id="cd09810">
    <property type="entry name" value="LPOR_like_SDR_c_like"/>
    <property type="match status" value="1"/>
</dbReference>
<dbReference type="Gene3D" id="3.40.50.720">
    <property type="entry name" value="NAD(P)-binding Rossmann-like Domain"/>
    <property type="match status" value="1"/>
</dbReference>
<dbReference type="InterPro" id="IPR036291">
    <property type="entry name" value="NAD(P)-bd_dom_sf"/>
</dbReference>
<dbReference type="InterPro" id="IPR005979">
    <property type="entry name" value="Prochl_reduct"/>
</dbReference>
<dbReference type="InterPro" id="IPR002347">
    <property type="entry name" value="SDR_fam"/>
</dbReference>
<dbReference type="NCBIfam" id="TIGR01289">
    <property type="entry name" value="LPOR"/>
    <property type="match status" value="1"/>
</dbReference>
<dbReference type="PANTHER" id="PTHR44419:SF19">
    <property type="entry name" value="PROTOCHLOROPHYLLIDE REDUCTASE A, CHLOROPLASTIC"/>
    <property type="match status" value="1"/>
</dbReference>
<dbReference type="PANTHER" id="PTHR44419">
    <property type="entry name" value="PROTOCHLOROPHYLLIDE REDUCTASE C, CHLOROPLASTIC"/>
    <property type="match status" value="1"/>
</dbReference>
<dbReference type="Pfam" id="PF00106">
    <property type="entry name" value="adh_short"/>
    <property type="match status" value="1"/>
</dbReference>
<dbReference type="PRINTS" id="PR00081">
    <property type="entry name" value="GDHRDH"/>
</dbReference>
<dbReference type="SUPFAM" id="SSF51735">
    <property type="entry name" value="NAD(P)-binding Rossmann-fold domains"/>
    <property type="match status" value="1"/>
</dbReference>
<protein>
    <recommendedName>
        <fullName>Protochlorophyllide reductase, chloroplastic</fullName>
        <shortName>PCR</shortName>
        <ecNumber>1.3.1.33</ecNumber>
    </recommendedName>
    <alternativeName>
        <fullName>NADPH-protochlorophyllide oxidoreductase</fullName>
        <shortName>POR</shortName>
    </alternativeName>
</protein>
<name>POR_PEA</name>
<proteinExistence type="evidence at protein level"/>
<gene>
    <name type="primary">3PCR</name>
</gene>
<sequence length="399" mass="42962">MALQTASMLPASFSIPKEGKIGASLKDSTLFGVSSLSDSLKGDFTSSALRCKELRQKVGAVRAETAAPATPAVNKSSSEGKKTLRKGNVVITGASSGLGLATAKALAESGKWHVIMACRDYLKAARAAKSAGLAKENYTIMHLDLASLDSVRQFVDNFRRSEMPLDVLINNAAVYFPTAKEPSFTADGFEISVGTNHLGHFLLSRLLLEDLKKSDYPSKRLIIVGSITGNTNTLAGNVPPKANLGDLRGLAGGLTGLNSSAMIDGGDFDGAKAYKDSKVCNMLTMQEFHRRYHEETGITFASLYPGCIATTGLFREHIPLFRTLFPPFQKYITKGYVSEEESGKRLAQVVSDPSLTKSGVYWSWNNASASFENQLSQEASDAEKARKVWEVSEKLVGLA</sequence>
<organism>
    <name type="scientific">Pisum sativum</name>
    <name type="common">Garden pea</name>
    <name type="synonym">Lathyrus oleraceus</name>
    <dbReference type="NCBI Taxonomy" id="3888"/>
    <lineage>
        <taxon>Eukaryota</taxon>
        <taxon>Viridiplantae</taxon>
        <taxon>Streptophyta</taxon>
        <taxon>Embryophyta</taxon>
        <taxon>Tracheophyta</taxon>
        <taxon>Spermatophyta</taxon>
        <taxon>Magnoliopsida</taxon>
        <taxon>eudicotyledons</taxon>
        <taxon>Gunneridae</taxon>
        <taxon>Pentapetalae</taxon>
        <taxon>rosids</taxon>
        <taxon>fabids</taxon>
        <taxon>Fabales</taxon>
        <taxon>Fabaceae</taxon>
        <taxon>Papilionoideae</taxon>
        <taxon>50 kb inversion clade</taxon>
        <taxon>NPAAA clade</taxon>
        <taxon>Hologalegina</taxon>
        <taxon>IRL clade</taxon>
        <taxon>Fabeae</taxon>
        <taxon>Pisum</taxon>
    </lineage>
</organism>
<comment type="function">
    <text>Phototransformation of protochlorophyllide (Pchlide) to chlorophyllide (Chlide).</text>
</comment>
<comment type="catalytic activity">
    <reaction>
        <text>chlorophyllide a + NADP(+) = protochlorophyllide a + NADPH + H(+)</text>
        <dbReference type="Rhea" id="RHEA:11132"/>
        <dbReference type="ChEBI" id="CHEBI:15378"/>
        <dbReference type="ChEBI" id="CHEBI:57783"/>
        <dbReference type="ChEBI" id="CHEBI:58349"/>
        <dbReference type="ChEBI" id="CHEBI:83348"/>
        <dbReference type="ChEBI" id="CHEBI:83350"/>
        <dbReference type="EC" id="1.3.1.33"/>
    </reaction>
</comment>
<comment type="pathway">
    <text>Porphyrin-containing compound metabolism; chlorophyll biosynthesis.</text>
</comment>
<comment type="subcellular location">
    <subcellularLocation>
        <location>Plastid</location>
        <location>Chloroplast</location>
    </subcellularLocation>
</comment>
<comment type="similarity">
    <text evidence="2">Belongs to the short-chain dehydrogenases/reductases (SDR) family. POR subfamily.</text>
</comment>
<keyword id="KW-0149">Chlorophyll biosynthesis</keyword>
<keyword id="KW-0150">Chloroplast</keyword>
<keyword id="KW-0903">Direct protein sequencing</keyword>
<keyword id="KW-0521">NADP</keyword>
<keyword id="KW-0560">Oxidoreductase</keyword>
<keyword id="KW-0602">Photosynthesis</keyword>
<keyword id="KW-0934">Plastid</keyword>
<keyword id="KW-0809">Transit peptide</keyword>
<accession>Q01289</accession>
<feature type="transit peptide" description="Chloroplast" evidence="1">
    <location>
        <begin position="1"/>
        <end position="64"/>
    </location>
</feature>
<feature type="chain" id="PRO_0000023296" description="Protochlorophyllide reductase, chloroplastic">
    <location>
        <begin position="65"/>
        <end position="399"/>
    </location>
</feature>
<reference key="1">
    <citation type="journal article" date="1992" name="Plant Mol. Biol.">
        <title>Molecular cloning, nuclear gene structure, and developmental expression of NADPH: protochlorophyllide oxidoreductase in pea (Pisum sativum L.).</title>
        <authorList>
            <person name="Spano A.J."/>
            <person name="He Z."/>
            <person name="Michel H."/>
            <person name="Hunt D.F."/>
            <person name="Timko M.P."/>
        </authorList>
    </citation>
    <scope>NUCLEOTIDE SEQUENCE [GENOMIC DNA]</scope>
    <scope>PROTEIN SEQUENCE OF 65-76</scope>
    <source>
        <strain>cv. Progress No. 9</strain>
    </source>
</reference>
<evidence type="ECO:0000269" key="1">
    <source>
    </source>
</evidence>
<evidence type="ECO:0000305" key="2"/>